<accession>P0A2D0</accession>
<accession>O85141</accession>
<protein>
    <recommendedName>
        <fullName>3-oxoacyl-[acyl-carrier-protein] reductase FabG</fullName>
        <ecNumber>1.1.1.100</ecNumber>
    </recommendedName>
    <alternativeName>
        <fullName>3-ketoacyl-acyl carrier protein reductase</fullName>
    </alternativeName>
    <alternativeName>
        <fullName>Beta-Ketoacyl-acyl carrier protein reductase</fullName>
    </alternativeName>
    <alternativeName>
        <fullName>Beta-ketoacyl-ACP reductase</fullName>
    </alternativeName>
</protein>
<sequence length="244" mass="25545">MSFEGKIALVTGASRGIGRAIAETLVARGAKVIGTATSENGAKNISDYLGANGKGLMLNVTDPASIESVLENIRAEFGEVDILVNNAGITRDNLLMRMKDDEWNDIIETNLSSVFRLSKAVMRAMMKKRCGRIITIGSVVGTMGNAGQANYAAAKAGLIGFSKSLAREVASRGITVNVVAPGFIETDMTRALSDDQRAGILAQVPAGRLGGAQEIASAVAFLASDEASYITGETLHVNGGMYMV</sequence>
<gene>
    <name type="primary">fabG</name>
    <name type="ordered locus">STY1234</name>
    <name type="ordered locus">t1725</name>
</gene>
<name>FABG_SALTI</name>
<keyword id="KW-0106">Calcium</keyword>
<keyword id="KW-0275">Fatty acid biosynthesis</keyword>
<keyword id="KW-0276">Fatty acid metabolism</keyword>
<keyword id="KW-0444">Lipid biosynthesis</keyword>
<keyword id="KW-0443">Lipid metabolism</keyword>
<keyword id="KW-0479">Metal-binding</keyword>
<keyword id="KW-0521">NADP</keyword>
<keyword id="KW-0560">Oxidoreductase</keyword>
<evidence type="ECO:0000250" key="1"/>
<evidence type="ECO:0000255" key="2">
    <source>
        <dbReference type="PROSITE-ProRule" id="PRU10001"/>
    </source>
</evidence>
<evidence type="ECO:0000305" key="3"/>
<reference key="1">
    <citation type="journal article" date="2001" name="Nature">
        <title>Complete genome sequence of a multiple drug resistant Salmonella enterica serovar Typhi CT18.</title>
        <authorList>
            <person name="Parkhill J."/>
            <person name="Dougan G."/>
            <person name="James K.D."/>
            <person name="Thomson N.R."/>
            <person name="Pickard D."/>
            <person name="Wain J."/>
            <person name="Churcher C.M."/>
            <person name="Mungall K.L."/>
            <person name="Bentley S.D."/>
            <person name="Holden M.T.G."/>
            <person name="Sebaihia M."/>
            <person name="Baker S."/>
            <person name="Basham D."/>
            <person name="Brooks K."/>
            <person name="Chillingworth T."/>
            <person name="Connerton P."/>
            <person name="Cronin A."/>
            <person name="Davis P."/>
            <person name="Davies R.M."/>
            <person name="Dowd L."/>
            <person name="White N."/>
            <person name="Farrar J."/>
            <person name="Feltwell T."/>
            <person name="Hamlin N."/>
            <person name="Haque A."/>
            <person name="Hien T.T."/>
            <person name="Holroyd S."/>
            <person name="Jagels K."/>
            <person name="Krogh A."/>
            <person name="Larsen T.S."/>
            <person name="Leather S."/>
            <person name="Moule S."/>
            <person name="O'Gaora P."/>
            <person name="Parry C."/>
            <person name="Quail M.A."/>
            <person name="Rutherford K.M."/>
            <person name="Simmonds M."/>
            <person name="Skelton J."/>
            <person name="Stevens K."/>
            <person name="Whitehead S."/>
            <person name="Barrell B.G."/>
        </authorList>
    </citation>
    <scope>NUCLEOTIDE SEQUENCE [LARGE SCALE GENOMIC DNA]</scope>
    <source>
        <strain>CT18</strain>
    </source>
</reference>
<reference key="2">
    <citation type="journal article" date="2003" name="J. Bacteriol.">
        <title>Comparative genomics of Salmonella enterica serovar Typhi strains Ty2 and CT18.</title>
        <authorList>
            <person name="Deng W."/>
            <person name="Liou S.-R."/>
            <person name="Plunkett G. III"/>
            <person name="Mayhew G.F."/>
            <person name="Rose D.J."/>
            <person name="Burland V."/>
            <person name="Kodoyianni V."/>
            <person name="Schwartz D.C."/>
            <person name="Blattner F.R."/>
        </authorList>
    </citation>
    <scope>NUCLEOTIDE SEQUENCE [LARGE SCALE GENOMIC DNA]</scope>
    <source>
        <strain>ATCC 700931 / Ty2</strain>
    </source>
</reference>
<feature type="chain" id="PRO_0000054680" description="3-oxoacyl-[acyl-carrier-protein] reductase FabG">
    <location>
        <begin position="1"/>
        <end position="244"/>
    </location>
</feature>
<feature type="active site" description="Proton acceptor" evidence="2">
    <location>
        <position position="151"/>
    </location>
</feature>
<feature type="binding site" evidence="1">
    <location>
        <begin position="12"/>
        <end position="15"/>
    </location>
    <ligand>
        <name>NADP(+)</name>
        <dbReference type="ChEBI" id="CHEBI:58349"/>
    </ligand>
</feature>
<feature type="binding site" evidence="1">
    <location>
        <position position="37"/>
    </location>
    <ligand>
        <name>NADP(+)</name>
        <dbReference type="ChEBI" id="CHEBI:58349"/>
    </ligand>
</feature>
<feature type="binding site" evidence="1">
    <location>
        <position position="50"/>
    </location>
    <ligand>
        <name>Ca(2+)</name>
        <dbReference type="ChEBI" id="CHEBI:29108"/>
        <label>1</label>
        <note>ligand shared between dimeric partners</note>
    </ligand>
</feature>
<feature type="binding site" evidence="1">
    <location>
        <position position="53"/>
    </location>
    <ligand>
        <name>Ca(2+)</name>
        <dbReference type="ChEBI" id="CHEBI:29108"/>
        <label>1</label>
        <note>ligand shared between dimeric partners</note>
    </ligand>
</feature>
<feature type="binding site" evidence="1">
    <location>
        <begin position="59"/>
        <end position="60"/>
    </location>
    <ligand>
        <name>NADP(+)</name>
        <dbReference type="ChEBI" id="CHEBI:58349"/>
    </ligand>
</feature>
<feature type="binding site" evidence="1">
    <location>
        <position position="86"/>
    </location>
    <ligand>
        <name>NADP(+)</name>
        <dbReference type="ChEBI" id="CHEBI:58349"/>
    </ligand>
</feature>
<feature type="binding site" evidence="1">
    <location>
        <position position="138"/>
    </location>
    <ligand>
        <name>substrate</name>
    </ligand>
</feature>
<feature type="binding site" evidence="1">
    <location>
        <position position="145"/>
    </location>
    <ligand>
        <name>Ca(2+)</name>
        <dbReference type="ChEBI" id="CHEBI:29108"/>
        <label>2</label>
    </ligand>
</feature>
<feature type="binding site" evidence="1">
    <location>
        <begin position="151"/>
        <end position="155"/>
    </location>
    <ligand>
        <name>NADP(+)</name>
        <dbReference type="ChEBI" id="CHEBI:58349"/>
    </ligand>
</feature>
<feature type="binding site" evidence="1">
    <location>
        <position position="184"/>
    </location>
    <ligand>
        <name>NADP(+)</name>
        <dbReference type="ChEBI" id="CHEBI:58349"/>
    </ligand>
</feature>
<feature type="binding site" evidence="1">
    <location>
        <position position="233"/>
    </location>
    <ligand>
        <name>Ca(2+)</name>
        <dbReference type="ChEBI" id="CHEBI:29108"/>
        <label>3</label>
        <note>ligand shared between dimeric partners</note>
    </ligand>
</feature>
<feature type="binding site" evidence="1">
    <location>
        <position position="234"/>
    </location>
    <ligand>
        <name>Ca(2+)</name>
        <dbReference type="ChEBI" id="CHEBI:29108"/>
        <label>3</label>
        <note>ligand shared between dimeric partners</note>
    </ligand>
</feature>
<organism>
    <name type="scientific">Salmonella typhi</name>
    <dbReference type="NCBI Taxonomy" id="90370"/>
    <lineage>
        <taxon>Bacteria</taxon>
        <taxon>Pseudomonadati</taxon>
        <taxon>Pseudomonadota</taxon>
        <taxon>Gammaproteobacteria</taxon>
        <taxon>Enterobacterales</taxon>
        <taxon>Enterobacteriaceae</taxon>
        <taxon>Salmonella</taxon>
    </lineage>
</organism>
<proteinExistence type="inferred from homology"/>
<dbReference type="EC" id="1.1.1.100"/>
<dbReference type="EMBL" id="AL513382">
    <property type="protein sequence ID" value="CAD08319.1"/>
    <property type="molecule type" value="Genomic_DNA"/>
</dbReference>
<dbReference type="EMBL" id="AE014613">
    <property type="protein sequence ID" value="AAO69349.1"/>
    <property type="molecule type" value="Genomic_DNA"/>
</dbReference>
<dbReference type="RefSeq" id="NP_455688.1">
    <property type="nucleotide sequence ID" value="NC_003198.1"/>
</dbReference>
<dbReference type="RefSeq" id="WP_000007236.1">
    <property type="nucleotide sequence ID" value="NZ_WSUR01000030.1"/>
</dbReference>
<dbReference type="SMR" id="P0A2D0"/>
<dbReference type="STRING" id="220341.gene:17585199"/>
<dbReference type="GeneID" id="66755598"/>
<dbReference type="KEGG" id="stt:t1725"/>
<dbReference type="KEGG" id="sty:STY1234"/>
<dbReference type="PATRIC" id="fig|220341.7.peg.1236"/>
<dbReference type="eggNOG" id="COG1028">
    <property type="taxonomic scope" value="Bacteria"/>
</dbReference>
<dbReference type="HOGENOM" id="CLU_010194_1_3_6"/>
<dbReference type="OMA" id="LFGVQCD"/>
<dbReference type="OrthoDB" id="9804774at2"/>
<dbReference type="UniPathway" id="UPA00094"/>
<dbReference type="Proteomes" id="UP000000541">
    <property type="component" value="Chromosome"/>
</dbReference>
<dbReference type="Proteomes" id="UP000002670">
    <property type="component" value="Chromosome"/>
</dbReference>
<dbReference type="GO" id="GO:0004316">
    <property type="term" value="F:3-oxoacyl-[acyl-carrier-protein] reductase (NADPH) activity"/>
    <property type="evidence" value="ECO:0000250"/>
    <property type="project" value="UniProtKB"/>
</dbReference>
<dbReference type="GO" id="GO:0046872">
    <property type="term" value="F:metal ion binding"/>
    <property type="evidence" value="ECO:0007669"/>
    <property type="project" value="UniProtKB-KW"/>
</dbReference>
<dbReference type="GO" id="GO:0051287">
    <property type="term" value="F:NAD binding"/>
    <property type="evidence" value="ECO:0007669"/>
    <property type="project" value="InterPro"/>
</dbReference>
<dbReference type="GO" id="GO:0050661">
    <property type="term" value="F:NADP binding"/>
    <property type="evidence" value="ECO:0000250"/>
    <property type="project" value="UniProtKB"/>
</dbReference>
<dbReference type="GO" id="GO:0030497">
    <property type="term" value="P:fatty acid elongation"/>
    <property type="evidence" value="ECO:0000250"/>
    <property type="project" value="UniProtKB"/>
</dbReference>
<dbReference type="CDD" id="cd05333">
    <property type="entry name" value="BKR_SDR_c"/>
    <property type="match status" value="1"/>
</dbReference>
<dbReference type="FunFam" id="3.40.50.720:FF:000037">
    <property type="entry name" value="3-oxoacyl-[acyl-carrier-protein] reductase FabG"/>
    <property type="match status" value="1"/>
</dbReference>
<dbReference type="Gene3D" id="3.40.50.720">
    <property type="entry name" value="NAD(P)-binding Rossmann-like Domain"/>
    <property type="match status" value="1"/>
</dbReference>
<dbReference type="InterPro" id="IPR011284">
    <property type="entry name" value="3oxo_ACP_reduc"/>
</dbReference>
<dbReference type="InterPro" id="IPR036291">
    <property type="entry name" value="NAD(P)-bd_dom_sf"/>
</dbReference>
<dbReference type="InterPro" id="IPR020904">
    <property type="entry name" value="Sc_DH/Rdtase_CS"/>
</dbReference>
<dbReference type="InterPro" id="IPR050259">
    <property type="entry name" value="SDR"/>
</dbReference>
<dbReference type="InterPro" id="IPR002347">
    <property type="entry name" value="SDR_fam"/>
</dbReference>
<dbReference type="NCBIfam" id="TIGR01830">
    <property type="entry name" value="3oxo_ACP_reduc"/>
    <property type="match status" value="1"/>
</dbReference>
<dbReference type="NCBIfam" id="NF004197">
    <property type="entry name" value="PRK05653.1-1"/>
    <property type="match status" value="1"/>
</dbReference>
<dbReference type="NCBIfam" id="NF005559">
    <property type="entry name" value="PRK07231.1"/>
    <property type="match status" value="1"/>
</dbReference>
<dbReference type="NCBIfam" id="NF009464">
    <property type="entry name" value="PRK12824.1"/>
    <property type="match status" value="1"/>
</dbReference>
<dbReference type="NCBIfam" id="NF009466">
    <property type="entry name" value="PRK12826.1-2"/>
    <property type="match status" value="1"/>
</dbReference>
<dbReference type="PANTHER" id="PTHR42879">
    <property type="entry name" value="3-OXOACYL-(ACYL-CARRIER-PROTEIN) REDUCTASE"/>
    <property type="match status" value="1"/>
</dbReference>
<dbReference type="PANTHER" id="PTHR42879:SF2">
    <property type="entry name" value="3-OXOACYL-[ACYL-CARRIER-PROTEIN] REDUCTASE FABG"/>
    <property type="match status" value="1"/>
</dbReference>
<dbReference type="Pfam" id="PF13561">
    <property type="entry name" value="adh_short_C2"/>
    <property type="match status" value="1"/>
</dbReference>
<dbReference type="PRINTS" id="PR00081">
    <property type="entry name" value="GDHRDH"/>
</dbReference>
<dbReference type="PRINTS" id="PR00080">
    <property type="entry name" value="SDRFAMILY"/>
</dbReference>
<dbReference type="SMART" id="SM00822">
    <property type="entry name" value="PKS_KR"/>
    <property type="match status" value="1"/>
</dbReference>
<dbReference type="SUPFAM" id="SSF51735">
    <property type="entry name" value="NAD(P)-binding Rossmann-fold domains"/>
    <property type="match status" value="1"/>
</dbReference>
<dbReference type="PROSITE" id="PS00061">
    <property type="entry name" value="ADH_SHORT"/>
    <property type="match status" value="1"/>
</dbReference>
<comment type="function">
    <text evidence="1">Catalyzes the NADPH-dependent reduction of beta-ketoacyl-ACP substrates to beta-hydroxyacyl-ACP products, the first reductive step in the elongation cycle of fatty acid biosynthesis.</text>
</comment>
<comment type="catalytic activity">
    <reaction>
        <text>a (3R)-hydroxyacyl-[ACP] + NADP(+) = a 3-oxoacyl-[ACP] + NADPH + H(+)</text>
        <dbReference type="Rhea" id="RHEA:17397"/>
        <dbReference type="Rhea" id="RHEA-COMP:9916"/>
        <dbReference type="Rhea" id="RHEA-COMP:9945"/>
        <dbReference type="ChEBI" id="CHEBI:15378"/>
        <dbReference type="ChEBI" id="CHEBI:57783"/>
        <dbReference type="ChEBI" id="CHEBI:58349"/>
        <dbReference type="ChEBI" id="CHEBI:78776"/>
        <dbReference type="ChEBI" id="CHEBI:78827"/>
        <dbReference type="EC" id="1.1.1.100"/>
    </reaction>
</comment>
<comment type="pathway">
    <text>Lipid metabolism; fatty acid biosynthesis.</text>
</comment>
<comment type="subunit">
    <text evidence="1">Homotetramer.</text>
</comment>
<comment type="miscellaneous">
    <text evidence="1">Calcium ions stabilize the structure, and may inhibit FabG activity by obstructing access to the active site.</text>
</comment>
<comment type="similarity">
    <text evidence="3">Belongs to the short-chain dehydrogenases/reductases (SDR) family.</text>
</comment>